<reference key="1">
    <citation type="journal article" date="2009" name="Proc. Natl. Acad. Sci. U.S.A.">
        <title>Characterizing a model human gut microbiota composed of members of its two dominant bacterial phyla.</title>
        <authorList>
            <person name="Mahowald M.A."/>
            <person name="Rey F.E."/>
            <person name="Seedorf H."/>
            <person name="Turnbaugh P.J."/>
            <person name="Fulton R.S."/>
            <person name="Wollam A."/>
            <person name="Shah N."/>
            <person name="Wang C."/>
            <person name="Magrini V."/>
            <person name="Wilson R.K."/>
            <person name="Cantarel B.L."/>
            <person name="Coutinho P.M."/>
            <person name="Henrissat B."/>
            <person name="Crock L.W."/>
            <person name="Russell A."/>
            <person name="Verberkmoes N.C."/>
            <person name="Hettich R.L."/>
            <person name="Gordon J.I."/>
        </authorList>
    </citation>
    <scope>NUCLEOTIDE SEQUENCE [LARGE SCALE GENOMIC DNA]</scope>
    <source>
        <strain>ATCC 33656 / DSM 3377 / JCM 17463 / KCTC 5835 / LMG 30912 / VPI 0990</strain>
    </source>
</reference>
<name>RF1_AGARV</name>
<protein>
    <recommendedName>
        <fullName evidence="1">Peptide chain release factor 1</fullName>
        <shortName evidence="1">RF-1</shortName>
    </recommendedName>
</protein>
<accession>C4Z911</accession>
<feature type="chain" id="PRO_1000202694" description="Peptide chain release factor 1">
    <location>
        <begin position="1"/>
        <end position="358"/>
    </location>
</feature>
<feature type="modified residue" description="N5-methylglutamine" evidence="1">
    <location>
        <position position="233"/>
    </location>
</feature>
<proteinExistence type="inferred from homology"/>
<comment type="function">
    <text evidence="1">Peptide chain release factor 1 directs the termination of translation in response to the peptide chain termination codons UAG and UAA.</text>
</comment>
<comment type="subcellular location">
    <subcellularLocation>
        <location evidence="1">Cytoplasm</location>
    </subcellularLocation>
</comment>
<comment type="PTM">
    <text evidence="1">Methylated by PrmC. Methylation increases the termination efficiency of RF1.</text>
</comment>
<comment type="similarity">
    <text evidence="1">Belongs to the prokaryotic/mitochondrial release factor family.</text>
</comment>
<gene>
    <name evidence="1" type="primary">prfA</name>
    <name type="ordered locus">EUBREC_1488</name>
</gene>
<keyword id="KW-0963">Cytoplasm</keyword>
<keyword id="KW-0488">Methylation</keyword>
<keyword id="KW-0648">Protein biosynthesis</keyword>
<dbReference type="EMBL" id="CP001107">
    <property type="protein sequence ID" value="ACR75242.1"/>
    <property type="molecule type" value="Genomic_DNA"/>
</dbReference>
<dbReference type="RefSeq" id="WP_012742341.1">
    <property type="nucleotide sequence ID" value="NC_012781.1"/>
</dbReference>
<dbReference type="SMR" id="C4Z911"/>
<dbReference type="STRING" id="515619.EUBREC_1488"/>
<dbReference type="PaxDb" id="515619-EUBREC_1488"/>
<dbReference type="GeneID" id="86988308"/>
<dbReference type="KEGG" id="ere:EUBREC_1488"/>
<dbReference type="HOGENOM" id="CLU_036856_0_1_9"/>
<dbReference type="Proteomes" id="UP000001477">
    <property type="component" value="Chromosome"/>
</dbReference>
<dbReference type="GO" id="GO:0005737">
    <property type="term" value="C:cytoplasm"/>
    <property type="evidence" value="ECO:0007669"/>
    <property type="project" value="UniProtKB-SubCell"/>
</dbReference>
<dbReference type="GO" id="GO:0016149">
    <property type="term" value="F:translation release factor activity, codon specific"/>
    <property type="evidence" value="ECO:0007669"/>
    <property type="project" value="UniProtKB-UniRule"/>
</dbReference>
<dbReference type="FunFam" id="3.30.160.20:FF:000004">
    <property type="entry name" value="Peptide chain release factor 1"/>
    <property type="match status" value="1"/>
</dbReference>
<dbReference type="FunFam" id="3.30.70.1660:FF:000002">
    <property type="entry name" value="Peptide chain release factor 1"/>
    <property type="match status" value="1"/>
</dbReference>
<dbReference type="FunFam" id="3.30.70.1660:FF:000004">
    <property type="entry name" value="Peptide chain release factor 1"/>
    <property type="match status" value="1"/>
</dbReference>
<dbReference type="Gene3D" id="3.30.160.20">
    <property type="match status" value="1"/>
</dbReference>
<dbReference type="Gene3D" id="3.30.70.1660">
    <property type="match status" value="1"/>
</dbReference>
<dbReference type="Gene3D" id="6.10.140.1950">
    <property type="match status" value="1"/>
</dbReference>
<dbReference type="HAMAP" id="MF_00093">
    <property type="entry name" value="Rel_fac_1"/>
    <property type="match status" value="1"/>
</dbReference>
<dbReference type="InterPro" id="IPR005139">
    <property type="entry name" value="PCRF"/>
</dbReference>
<dbReference type="InterPro" id="IPR000352">
    <property type="entry name" value="Pep_chain_release_fac_I"/>
</dbReference>
<dbReference type="InterPro" id="IPR045853">
    <property type="entry name" value="Pep_chain_release_fac_I_sf"/>
</dbReference>
<dbReference type="InterPro" id="IPR050057">
    <property type="entry name" value="Prokaryotic/Mito_RF"/>
</dbReference>
<dbReference type="InterPro" id="IPR004373">
    <property type="entry name" value="RF-1"/>
</dbReference>
<dbReference type="NCBIfam" id="TIGR00019">
    <property type="entry name" value="prfA"/>
    <property type="match status" value="1"/>
</dbReference>
<dbReference type="NCBIfam" id="NF001859">
    <property type="entry name" value="PRK00591.1"/>
    <property type="match status" value="1"/>
</dbReference>
<dbReference type="PANTHER" id="PTHR43804">
    <property type="entry name" value="LD18447P"/>
    <property type="match status" value="1"/>
</dbReference>
<dbReference type="PANTHER" id="PTHR43804:SF7">
    <property type="entry name" value="LD18447P"/>
    <property type="match status" value="1"/>
</dbReference>
<dbReference type="Pfam" id="PF03462">
    <property type="entry name" value="PCRF"/>
    <property type="match status" value="1"/>
</dbReference>
<dbReference type="Pfam" id="PF00472">
    <property type="entry name" value="RF-1"/>
    <property type="match status" value="1"/>
</dbReference>
<dbReference type="SMART" id="SM00937">
    <property type="entry name" value="PCRF"/>
    <property type="match status" value="1"/>
</dbReference>
<dbReference type="SUPFAM" id="SSF75620">
    <property type="entry name" value="Release factor"/>
    <property type="match status" value="1"/>
</dbReference>
<dbReference type="PROSITE" id="PS00745">
    <property type="entry name" value="RF_PROK_I"/>
    <property type="match status" value="1"/>
</dbReference>
<evidence type="ECO:0000255" key="1">
    <source>
        <dbReference type="HAMAP-Rule" id="MF_00093"/>
    </source>
</evidence>
<sequence length="358" mass="40688">MFDKLEDLIHHYEELMNLLSEPDVANDANRFKKLMKEQSDLAPIVETYKKYKECKQNIEDSLAILDEESDEEMRELAKEELKDSKEQVEELEKKLKILLLPKDPNDDKNVIVEIRAGAGGEEAALFAAEIYRMYVHYAENRGWKVETLDADETGIGGMKSVEFMVKGSGAYSILKYESGVHRVQRVPETESQGRIQTSTCSVAVMPEAEDVDVKIDDKDIRIDVMRASGNGGQCVNTTDSAVRLTHYPTGIVIYSQTEKSQIQNKEKAFALLRTKLYDMELQKKQDAEAEERRSQIGTGDRAEKIRTYNFPQGRVTDHRINLTLYKLDKILNGDIQEIIDACIAADQAKKLSNMEHDA</sequence>
<organism>
    <name type="scientific">Agathobacter rectalis (strain ATCC 33656 / DSM 3377 / JCM 17463 / KCTC 5835 / VPI 0990)</name>
    <name type="common">Eubacterium rectale</name>
    <dbReference type="NCBI Taxonomy" id="515619"/>
    <lineage>
        <taxon>Bacteria</taxon>
        <taxon>Bacillati</taxon>
        <taxon>Bacillota</taxon>
        <taxon>Clostridia</taxon>
        <taxon>Lachnospirales</taxon>
        <taxon>Lachnospiraceae</taxon>
        <taxon>Agathobacter</taxon>
    </lineage>
</organism>